<gene>
    <name evidence="1" type="primary">fliE</name>
    <name type="ordered locus">EFER_1921</name>
</gene>
<keyword id="KW-0975">Bacterial flagellum</keyword>
<dbReference type="EMBL" id="CU928158">
    <property type="protein sequence ID" value="CAQ89430.1"/>
    <property type="molecule type" value="Genomic_DNA"/>
</dbReference>
<dbReference type="RefSeq" id="WP_001274309.1">
    <property type="nucleotide sequence ID" value="NC_011740.1"/>
</dbReference>
<dbReference type="SMR" id="B7LTC6"/>
<dbReference type="GeneID" id="75057047"/>
<dbReference type="KEGG" id="efe:EFER_1921"/>
<dbReference type="HOGENOM" id="CLU_147249_0_2_6"/>
<dbReference type="OrthoDB" id="8909229at2"/>
<dbReference type="Proteomes" id="UP000000745">
    <property type="component" value="Chromosome"/>
</dbReference>
<dbReference type="GO" id="GO:0009425">
    <property type="term" value="C:bacterial-type flagellum basal body"/>
    <property type="evidence" value="ECO:0007669"/>
    <property type="project" value="UniProtKB-SubCell"/>
</dbReference>
<dbReference type="GO" id="GO:0003774">
    <property type="term" value="F:cytoskeletal motor activity"/>
    <property type="evidence" value="ECO:0007669"/>
    <property type="project" value="InterPro"/>
</dbReference>
<dbReference type="GO" id="GO:0005198">
    <property type="term" value="F:structural molecule activity"/>
    <property type="evidence" value="ECO:0007669"/>
    <property type="project" value="InterPro"/>
</dbReference>
<dbReference type="GO" id="GO:0071973">
    <property type="term" value="P:bacterial-type flagellum-dependent cell motility"/>
    <property type="evidence" value="ECO:0007669"/>
    <property type="project" value="InterPro"/>
</dbReference>
<dbReference type="HAMAP" id="MF_00724">
    <property type="entry name" value="FliE"/>
    <property type="match status" value="1"/>
</dbReference>
<dbReference type="InterPro" id="IPR001624">
    <property type="entry name" value="FliE"/>
</dbReference>
<dbReference type="NCBIfam" id="TIGR00205">
    <property type="entry name" value="fliE"/>
    <property type="match status" value="1"/>
</dbReference>
<dbReference type="PANTHER" id="PTHR34653">
    <property type="match status" value="1"/>
</dbReference>
<dbReference type="PANTHER" id="PTHR34653:SF1">
    <property type="entry name" value="FLAGELLAR HOOK-BASAL BODY COMPLEX PROTEIN FLIE"/>
    <property type="match status" value="1"/>
</dbReference>
<dbReference type="Pfam" id="PF02049">
    <property type="entry name" value="FliE"/>
    <property type="match status" value="1"/>
</dbReference>
<dbReference type="PRINTS" id="PR01006">
    <property type="entry name" value="FLGHOOKFLIE"/>
</dbReference>
<organism>
    <name type="scientific">Escherichia fergusonii (strain ATCC 35469 / DSM 13698 / CCUG 18766 / IAM 14443 / JCM 21226 / LMG 7866 / NBRC 102419 / NCTC 12128 / CDC 0568-73)</name>
    <dbReference type="NCBI Taxonomy" id="585054"/>
    <lineage>
        <taxon>Bacteria</taxon>
        <taxon>Pseudomonadati</taxon>
        <taxon>Pseudomonadota</taxon>
        <taxon>Gammaproteobacteria</taxon>
        <taxon>Enterobacterales</taxon>
        <taxon>Enterobacteriaceae</taxon>
        <taxon>Escherichia</taxon>
    </lineage>
</organism>
<name>FLIE_ESCF3</name>
<feature type="chain" id="PRO_1000132660" description="Flagellar hook-basal body complex protein FliE">
    <location>
        <begin position="1"/>
        <end position="104"/>
    </location>
</feature>
<evidence type="ECO:0000255" key="1">
    <source>
        <dbReference type="HAMAP-Rule" id="MF_00724"/>
    </source>
</evidence>
<accession>B7LTC6</accession>
<sequence length="104" mass="11195">MSAIQGIQGVISQLQATAMSARAQEPMPQPTISFAGQLHAALDRISDTQNTARVQAEKFTLGEPGVALNDVMTDMQKASVSMQMGIQVRNKLVAAYQEVMSMQV</sequence>
<reference key="1">
    <citation type="journal article" date="2009" name="PLoS Genet.">
        <title>Organised genome dynamics in the Escherichia coli species results in highly diverse adaptive paths.</title>
        <authorList>
            <person name="Touchon M."/>
            <person name="Hoede C."/>
            <person name="Tenaillon O."/>
            <person name="Barbe V."/>
            <person name="Baeriswyl S."/>
            <person name="Bidet P."/>
            <person name="Bingen E."/>
            <person name="Bonacorsi S."/>
            <person name="Bouchier C."/>
            <person name="Bouvet O."/>
            <person name="Calteau A."/>
            <person name="Chiapello H."/>
            <person name="Clermont O."/>
            <person name="Cruveiller S."/>
            <person name="Danchin A."/>
            <person name="Diard M."/>
            <person name="Dossat C."/>
            <person name="Karoui M.E."/>
            <person name="Frapy E."/>
            <person name="Garry L."/>
            <person name="Ghigo J.M."/>
            <person name="Gilles A.M."/>
            <person name="Johnson J."/>
            <person name="Le Bouguenec C."/>
            <person name="Lescat M."/>
            <person name="Mangenot S."/>
            <person name="Martinez-Jehanne V."/>
            <person name="Matic I."/>
            <person name="Nassif X."/>
            <person name="Oztas S."/>
            <person name="Petit M.A."/>
            <person name="Pichon C."/>
            <person name="Rouy Z."/>
            <person name="Ruf C.S."/>
            <person name="Schneider D."/>
            <person name="Tourret J."/>
            <person name="Vacherie B."/>
            <person name="Vallenet D."/>
            <person name="Medigue C."/>
            <person name="Rocha E.P.C."/>
            <person name="Denamur E."/>
        </authorList>
    </citation>
    <scope>NUCLEOTIDE SEQUENCE [LARGE SCALE GENOMIC DNA]</scope>
    <source>
        <strain>ATCC 35469 / DSM 13698 / BCRC 15582 / CCUG 18766 / IAM 14443 / JCM 21226 / LMG 7866 / NBRC 102419 / NCTC 12128 / CDC 0568-73</strain>
    </source>
</reference>
<protein>
    <recommendedName>
        <fullName evidence="1">Flagellar hook-basal body complex protein FliE</fullName>
    </recommendedName>
</protein>
<comment type="subcellular location">
    <subcellularLocation>
        <location evidence="1">Bacterial flagellum basal body</location>
    </subcellularLocation>
</comment>
<comment type="similarity">
    <text evidence="1">Belongs to the FliE family.</text>
</comment>
<proteinExistence type="inferred from homology"/>